<evidence type="ECO:0000255" key="1">
    <source>
        <dbReference type="HAMAP-Rule" id="MF_00222"/>
    </source>
</evidence>
<reference key="1">
    <citation type="journal article" date="2005" name="Nucleic Acids Res.">
        <title>Genome dynamics and diversity of Shigella species, the etiologic agents of bacillary dysentery.</title>
        <authorList>
            <person name="Yang F."/>
            <person name="Yang J."/>
            <person name="Zhang X."/>
            <person name="Chen L."/>
            <person name="Jiang Y."/>
            <person name="Yan Y."/>
            <person name="Tang X."/>
            <person name="Wang J."/>
            <person name="Xiong Z."/>
            <person name="Dong J."/>
            <person name="Xue Y."/>
            <person name="Zhu Y."/>
            <person name="Xu X."/>
            <person name="Sun L."/>
            <person name="Chen S."/>
            <person name="Nie H."/>
            <person name="Peng J."/>
            <person name="Xu J."/>
            <person name="Wang Y."/>
            <person name="Yuan Z."/>
            <person name="Wen Y."/>
            <person name="Yao Z."/>
            <person name="Shen Y."/>
            <person name="Qiang B."/>
            <person name="Hou Y."/>
            <person name="Yu J."/>
            <person name="Jin Q."/>
        </authorList>
    </citation>
    <scope>NUCLEOTIDE SEQUENCE [LARGE SCALE GENOMIC DNA]</scope>
    <source>
        <strain>Sd197</strain>
    </source>
</reference>
<organism>
    <name type="scientific">Shigella dysenteriae serotype 1 (strain Sd197)</name>
    <dbReference type="NCBI Taxonomy" id="300267"/>
    <lineage>
        <taxon>Bacteria</taxon>
        <taxon>Pseudomonadati</taxon>
        <taxon>Pseudomonadota</taxon>
        <taxon>Gammaproteobacteria</taxon>
        <taxon>Enterobacterales</taxon>
        <taxon>Enterobacteriaceae</taxon>
        <taxon>Shigella</taxon>
    </lineage>
</organism>
<accession>Q32B68</accession>
<gene>
    <name evidence="1" type="primary">aroE</name>
    <name type="ordered locus">SDY_3458</name>
</gene>
<protein>
    <recommendedName>
        <fullName evidence="1">Shikimate dehydrogenase (NADP(+))</fullName>
        <shortName evidence="1">SDH</shortName>
        <ecNumber evidence="1">1.1.1.25</ecNumber>
    </recommendedName>
</protein>
<sequence length="272" mass="29495">METYAVFGNPIAHSKSPFIHQQFAQQLNIEHPYGRVLAPINDFINTLNAFFRAGGKGANVTVPFKEEAFARADELTERAALAGAVNTLMRLEDGRLLGDNTDGVGLLSDLERLSFIRPGLRILLIGAGGASRGVLLPLLSLDCAVTITNRTVSRAEELAKLFEHTGSIQALGMDELEGHEFDLIINATSSGISGDIPAIPSSLIHPGIYCYDMFYQKGKTPFLAWCEQRGSKRNADGLGMLVAQAAHAFLLWHGVLPDVEPVIKLLQQELSA</sequence>
<proteinExistence type="inferred from homology"/>
<name>AROE_SHIDS</name>
<dbReference type="EC" id="1.1.1.25" evidence="1"/>
<dbReference type="EMBL" id="CP000034">
    <property type="protein sequence ID" value="ABB63437.1"/>
    <property type="molecule type" value="Genomic_DNA"/>
</dbReference>
<dbReference type="RefSeq" id="WP_000451221.1">
    <property type="nucleotide sequence ID" value="NC_007606.1"/>
</dbReference>
<dbReference type="RefSeq" id="YP_404928.1">
    <property type="nucleotide sequence ID" value="NC_007606.1"/>
</dbReference>
<dbReference type="SMR" id="Q32B68"/>
<dbReference type="STRING" id="300267.SDY_3458"/>
<dbReference type="EnsemblBacteria" id="ABB63437">
    <property type="protein sequence ID" value="ABB63437"/>
    <property type="gene ID" value="SDY_3458"/>
</dbReference>
<dbReference type="KEGG" id="sdy:SDY_3458"/>
<dbReference type="PATRIC" id="fig|300267.13.peg.4111"/>
<dbReference type="HOGENOM" id="CLU_044063_2_1_6"/>
<dbReference type="UniPathway" id="UPA00053">
    <property type="reaction ID" value="UER00087"/>
</dbReference>
<dbReference type="Proteomes" id="UP000002716">
    <property type="component" value="Chromosome"/>
</dbReference>
<dbReference type="GO" id="GO:0005829">
    <property type="term" value="C:cytosol"/>
    <property type="evidence" value="ECO:0007669"/>
    <property type="project" value="TreeGrafter"/>
</dbReference>
<dbReference type="GO" id="GO:0050661">
    <property type="term" value="F:NADP binding"/>
    <property type="evidence" value="ECO:0007669"/>
    <property type="project" value="InterPro"/>
</dbReference>
<dbReference type="GO" id="GO:0004764">
    <property type="term" value="F:shikimate 3-dehydrogenase (NADP+) activity"/>
    <property type="evidence" value="ECO:0007669"/>
    <property type="project" value="UniProtKB-UniRule"/>
</dbReference>
<dbReference type="GO" id="GO:0008652">
    <property type="term" value="P:amino acid biosynthetic process"/>
    <property type="evidence" value="ECO:0007669"/>
    <property type="project" value="UniProtKB-KW"/>
</dbReference>
<dbReference type="GO" id="GO:0009073">
    <property type="term" value="P:aromatic amino acid family biosynthetic process"/>
    <property type="evidence" value="ECO:0007669"/>
    <property type="project" value="UniProtKB-KW"/>
</dbReference>
<dbReference type="GO" id="GO:0009423">
    <property type="term" value="P:chorismate biosynthetic process"/>
    <property type="evidence" value="ECO:0007669"/>
    <property type="project" value="UniProtKB-UniRule"/>
</dbReference>
<dbReference type="GO" id="GO:0019632">
    <property type="term" value="P:shikimate metabolic process"/>
    <property type="evidence" value="ECO:0007669"/>
    <property type="project" value="InterPro"/>
</dbReference>
<dbReference type="CDD" id="cd01065">
    <property type="entry name" value="NAD_bind_Shikimate_DH"/>
    <property type="match status" value="1"/>
</dbReference>
<dbReference type="FunFam" id="3.40.50.10860:FF:000006">
    <property type="entry name" value="Shikimate dehydrogenase (NADP(+))"/>
    <property type="match status" value="1"/>
</dbReference>
<dbReference type="FunFam" id="3.40.50.720:FF:000104">
    <property type="entry name" value="Shikimate dehydrogenase (NADP(+))"/>
    <property type="match status" value="1"/>
</dbReference>
<dbReference type="Gene3D" id="3.40.50.10860">
    <property type="entry name" value="Leucine Dehydrogenase, chain A, domain 1"/>
    <property type="match status" value="1"/>
</dbReference>
<dbReference type="Gene3D" id="3.40.50.720">
    <property type="entry name" value="NAD(P)-binding Rossmann-like Domain"/>
    <property type="match status" value="1"/>
</dbReference>
<dbReference type="HAMAP" id="MF_00222">
    <property type="entry name" value="Shikimate_DH_AroE"/>
    <property type="match status" value="1"/>
</dbReference>
<dbReference type="InterPro" id="IPR046346">
    <property type="entry name" value="Aminoacid_DH-like_N_sf"/>
</dbReference>
<dbReference type="InterPro" id="IPR036291">
    <property type="entry name" value="NAD(P)-bd_dom_sf"/>
</dbReference>
<dbReference type="InterPro" id="IPR041121">
    <property type="entry name" value="SDH_C"/>
</dbReference>
<dbReference type="InterPro" id="IPR011342">
    <property type="entry name" value="Shikimate_DH"/>
</dbReference>
<dbReference type="InterPro" id="IPR013708">
    <property type="entry name" value="Shikimate_DH-bd_N"/>
</dbReference>
<dbReference type="InterPro" id="IPR022893">
    <property type="entry name" value="Shikimate_DH_fam"/>
</dbReference>
<dbReference type="InterPro" id="IPR006151">
    <property type="entry name" value="Shikm_DH/Glu-tRNA_Rdtase"/>
</dbReference>
<dbReference type="NCBIfam" id="TIGR00507">
    <property type="entry name" value="aroE"/>
    <property type="match status" value="1"/>
</dbReference>
<dbReference type="NCBIfam" id="NF001310">
    <property type="entry name" value="PRK00258.1-2"/>
    <property type="match status" value="1"/>
</dbReference>
<dbReference type="PANTHER" id="PTHR21089:SF1">
    <property type="entry name" value="BIFUNCTIONAL 3-DEHYDROQUINATE DEHYDRATASE_SHIKIMATE DEHYDROGENASE, CHLOROPLASTIC"/>
    <property type="match status" value="1"/>
</dbReference>
<dbReference type="PANTHER" id="PTHR21089">
    <property type="entry name" value="SHIKIMATE DEHYDROGENASE"/>
    <property type="match status" value="1"/>
</dbReference>
<dbReference type="Pfam" id="PF18317">
    <property type="entry name" value="SDH_C"/>
    <property type="match status" value="1"/>
</dbReference>
<dbReference type="Pfam" id="PF01488">
    <property type="entry name" value="Shikimate_DH"/>
    <property type="match status" value="1"/>
</dbReference>
<dbReference type="Pfam" id="PF08501">
    <property type="entry name" value="Shikimate_dh_N"/>
    <property type="match status" value="1"/>
</dbReference>
<dbReference type="SUPFAM" id="SSF53223">
    <property type="entry name" value="Aminoacid dehydrogenase-like, N-terminal domain"/>
    <property type="match status" value="1"/>
</dbReference>
<dbReference type="SUPFAM" id="SSF51735">
    <property type="entry name" value="NAD(P)-binding Rossmann-fold domains"/>
    <property type="match status" value="1"/>
</dbReference>
<comment type="function">
    <text evidence="1">Involved in the biosynthesis of the chorismate, which leads to the biosynthesis of aromatic amino acids. Catalyzes the reversible NADPH linked reduction of 3-dehydroshikimate (DHSA) to yield shikimate (SA).</text>
</comment>
<comment type="catalytic activity">
    <reaction evidence="1">
        <text>shikimate + NADP(+) = 3-dehydroshikimate + NADPH + H(+)</text>
        <dbReference type="Rhea" id="RHEA:17737"/>
        <dbReference type="ChEBI" id="CHEBI:15378"/>
        <dbReference type="ChEBI" id="CHEBI:16630"/>
        <dbReference type="ChEBI" id="CHEBI:36208"/>
        <dbReference type="ChEBI" id="CHEBI:57783"/>
        <dbReference type="ChEBI" id="CHEBI:58349"/>
        <dbReference type="EC" id="1.1.1.25"/>
    </reaction>
</comment>
<comment type="pathway">
    <text evidence="1">Metabolic intermediate biosynthesis; chorismate biosynthesis; chorismate from D-erythrose 4-phosphate and phosphoenolpyruvate: step 4/7.</text>
</comment>
<comment type="subunit">
    <text evidence="1">Homodimer.</text>
</comment>
<comment type="similarity">
    <text evidence="1">Belongs to the shikimate dehydrogenase family.</text>
</comment>
<feature type="chain" id="PRO_1000021332" description="Shikimate dehydrogenase (NADP(+))">
    <location>
        <begin position="1"/>
        <end position="272"/>
    </location>
</feature>
<feature type="active site" description="Proton acceptor" evidence="1">
    <location>
        <position position="65"/>
    </location>
</feature>
<feature type="binding site" evidence="1">
    <location>
        <begin position="14"/>
        <end position="16"/>
    </location>
    <ligand>
        <name>shikimate</name>
        <dbReference type="ChEBI" id="CHEBI:36208"/>
    </ligand>
</feature>
<feature type="binding site" evidence="1">
    <location>
        <position position="61"/>
    </location>
    <ligand>
        <name>shikimate</name>
        <dbReference type="ChEBI" id="CHEBI:36208"/>
    </ligand>
</feature>
<feature type="binding site" evidence="1">
    <location>
        <position position="77"/>
    </location>
    <ligand>
        <name>NADP(+)</name>
        <dbReference type="ChEBI" id="CHEBI:58349"/>
    </ligand>
</feature>
<feature type="binding site" evidence="1">
    <location>
        <position position="86"/>
    </location>
    <ligand>
        <name>shikimate</name>
        <dbReference type="ChEBI" id="CHEBI:36208"/>
    </ligand>
</feature>
<feature type="binding site" evidence="1">
    <location>
        <position position="102"/>
    </location>
    <ligand>
        <name>shikimate</name>
        <dbReference type="ChEBI" id="CHEBI:36208"/>
    </ligand>
</feature>
<feature type="binding site" evidence="1">
    <location>
        <begin position="126"/>
        <end position="130"/>
    </location>
    <ligand>
        <name>NADP(+)</name>
        <dbReference type="ChEBI" id="CHEBI:58349"/>
    </ligand>
</feature>
<feature type="binding site" evidence="1">
    <location>
        <begin position="149"/>
        <end position="154"/>
    </location>
    <ligand>
        <name>NADP(+)</name>
        <dbReference type="ChEBI" id="CHEBI:58349"/>
    </ligand>
</feature>
<feature type="binding site" evidence="1">
    <location>
        <position position="213"/>
    </location>
    <ligand>
        <name>NADP(+)</name>
        <dbReference type="ChEBI" id="CHEBI:58349"/>
    </ligand>
</feature>
<feature type="binding site" evidence="1">
    <location>
        <position position="215"/>
    </location>
    <ligand>
        <name>shikimate</name>
        <dbReference type="ChEBI" id="CHEBI:36208"/>
    </ligand>
</feature>
<feature type="binding site" evidence="1">
    <location>
        <position position="237"/>
    </location>
    <ligand>
        <name>NADP(+)</name>
        <dbReference type="ChEBI" id="CHEBI:58349"/>
    </ligand>
</feature>
<keyword id="KW-0028">Amino-acid biosynthesis</keyword>
<keyword id="KW-0057">Aromatic amino acid biosynthesis</keyword>
<keyword id="KW-0521">NADP</keyword>
<keyword id="KW-0560">Oxidoreductase</keyword>
<keyword id="KW-1185">Reference proteome</keyword>